<name>TIM10_ASPFU</name>
<keyword id="KW-0143">Chaperone</keyword>
<keyword id="KW-1015">Disulfide bond</keyword>
<keyword id="KW-0472">Membrane</keyword>
<keyword id="KW-0479">Metal-binding</keyword>
<keyword id="KW-0496">Mitochondrion</keyword>
<keyword id="KW-0999">Mitochondrion inner membrane</keyword>
<keyword id="KW-0653">Protein transport</keyword>
<keyword id="KW-1185">Reference proteome</keyword>
<keyword id="KW-0811">Translocation</keyword>
<keyword id="KW-0813">Transport</keyword>
<keyword id="KW-0862">Zinc</keyword>
<proteinExistence type="inferred from homology"/>
<sequence length="93" mass="10235">MSFLFGGPPKMSSAEKIAAAETEVEMVSDMFNRLTESCQKKCIPNDYREGDLNKGESVCLDRCVSKFFEVNIKVSEKMQGEAAQKQGAPGFGM</sequence>
<evidence type="ECO:0000250" key="1"/>
<evidence type="ECO:0000305" key="2"/>
<gene>
    <name type="primary">tim10</name>
    <name type="ORF">AFUA_1G04470</name>
</gene>
<accession>Q4WJX5</accession>
<comment type="function">
    <text evidence="1">Mitochondrial intermembrane chaperone that participates in the import and insertion of multi-pass transmembrane proteins into the mitochondrial inner membrane. Also required for the transfer of beta-barrel precursors from the TOM complex to the sorting and assembly machinery (SAM complex) of the outer membrane. Acts as a chaperone-like protein that protects the hydrophobic precursors from aggregation and guide them through the mitochondrial intermembrane space (By similarity).</text>
</comment>
<comment type="subunit">
    <text evidence="1">Heterohexamer; composed of 3 copies of TIM9 and 3 copies of TIM10, named soluble 70 kDa complex. Associates directly with the TIM22 complex, whose core is composed of TIM22 and TIM54. Interacts with the transmembrane regions of multi-pass transmembrane proteins in transit (By similarity).</text>
</comment>
<comment type="subcellular location">
    <subcellularLocation>
        <location evidence="1">Mitochondrion inner membrane</location>
        <topology evidence="1">Peripheral membrane protein</topology>
        <orientation evidence="1">Intermembrane side</orientation>
    </subcellularLocation>
</comment>
<comment type="domain">
    <text evidence="1">The twin CX3C motif contains 4 conserved Cys residues that form 2 disulfide bonds in the mitochondrial intermembrane space. However, during the transit of TIM10 from cytoplasm into mitochondrion, the Cys residues probably coordinate zinc, thereby preventing folding and allowing its transfer across mitochondrial outer membrane (By similarity).</text>
</comment>
<comment type="similarity">
    <text evidence="2">Belongs to the small Tim family.</text>
</comment>
<dbReference type="EMBL" id="AAHF01000007">
    <property type="protein sequence ID" value="EAL88157.1"/>
    <property type="molecule type" value="Genomic_DNA"/>
</dbReference>
<dbReference type="RefSeq" id="XP_750195.1">
    <property type="nucleotide sequence ID" value="XM_745102.1"/>
</dbReference>
<dbReference type="SMR" id="Q4WJX5"/>
<dbReference type="FunCoup" id="Q4WJX5">
    <property type="interactions" value="655"/>
</dbReference>
<dbReference type="STRING" id="330879.Q4WJX5"/>
<dbReference type="EnsemblFungi" id="EAL88157">
    <property type="protein sequence ID" value="EAL88157"/>
    <property type="gene ID" value="AFUA_1G04470"/>
</dbReference>
<dbReference type="GeneID" id="3507297"/>
<dbReference type="KEGG" id="afm:AFUA_1G04470"/>
<dbReference type="VEuPathDB" id="FungiDB:Afu1g04470"/>
<dbReference type="eggNOG" id="KOG3480">
    <property type="taxonomic scope" value="Eukaryota"/>
</dbReference>
<dbReference type="HOGENOM" id="CLU_162151_1_0_1"/>
<dbReference type="InParanoid" id="Q4WJX5"/>
<dbReference type="OMA" id="VGENMQK"/>
<dbReference type="OrthoDB" id="274922at2759"/>
<dbReference type="Proteomes" id="UP000002530">
    <property type="component" value="Chromosome 1"/>
</dbReference>
<dbReference type="GO" id="GO:0005743">
    <property type="term" value="C:mitochondrial inner membrane"/>
    <property type="evidence" value="ECO:0000318"/>
    <property type="project" value="GO_Central"/>
</dbReference>
<dbReference type="GO" id="GO:0042719">
    <property type="term" value="C:mitochondrial intermembrane space protein transporter complex"/>
    <property type="evidence" value="ECO:0007669"/>
    <property type="project" value="EnsemblFungi"/>
</dbReference>
<dbReference type="GO" id="GO:0042721">
    <property type="term" value="C:TIM22 mitochondrial import inner membrane insertion complex"/>
    <property type="evidence" value="ECO:0007669"/>
    <property type="project" value="EnsemblFungi"/>
</dbReference>
<dbReference type="GO" id="GO:0046872">
    <property type="term" value="F:metal ion binding"/>
    <property type="evidence" value="ECO:0007669"/>
    <property type="project" value="UniProtKB-KW"/>
</dbReference>
<dbReference type="GO" id="GO:0140318">
    <property type="term" value="F:protein transporter activity"/>
    <property type="evidence" value="ECO:0007669"/>
    <property type="project" value="EnsemblFungi"/>
</dbReference>
<dbReference type="GO" id="GO:0051082">
    <property type="term" value="F:unfolded protein binding"/>
    <property type="evidence" value="ECO:0007669"/>
    <property type="project" value="EnsemblFungi"/>
</dbReference>
<dbReference type="GO" id="GO:0045039">
    <property type="term" value="P:protein insertion into mitochondrial inner membrane"/>
    <property type="evidence" value="ECO:0000318"/>
    <property type="project" value="GO_Central"/>
</dbReference>
<dbReference type="FunFam" id="1.10.287.810:FF:000002">
    <property type="entry name" value="Mitochondrial import inner membrane translocase subunit tim10"/>
    <property type="match status" value="1"/>
</dbReference>
<dbReference type="Gene3D" id="1.10.287.810">
    <property type="entry name" value="Mitochondrial import inner membrane translocase subunit tim13 like domains"/>
    <property type="match status" value="1"/>
</dbReference>
<dbReference type="InterPro" id="IPR004217">
    <property type="entry name" value="Tim10-like"/>
</dbReference>
<dbReference type="InterPro" id="IPR035427">
    <property type="entry name" value="Tim10-like_dom_sf"/>
</dbReference>
<dbReference type="PANTHER" id="PTHR11038">
    <property type="entry name" value="MITOCHONDRIAL IMPORT INNER MEMBRANE TRANSLOCASE SUBUNIT TIM10"/>
    <property type="match status" value="1"/>
</dbReference>
<dbReference type="PANTHER" id="PTHR11038:SF16">
    <property type="entry name" value="MITOCHONDRIAL IMPORT INNER MEMBRANE TRANSLOCASE SUBUNIT TIM10"/>
    <property type="match status" value="1"/>
</dbReference>
<dbReference type="Pfam" id="PF02953">
    <property type="entry name" value="zf-Tim10_DDP"/>
    <property type="match status" value="1"/>
</dbReference>
<dbReference type="SUPFAM" id="SSF144122">
    <property type="entry name" value="Tim10-like"/>
    <property type="match status" value="1"/>
</dbReference>
<protein>
    <recommendedName>
        <fullName>Mitochondrial import inner membrane translocase subunit tim10</fullName>
    </recommendedName>
</protein>
<organism>
    <name type="scientific">Aspergillus fumigatus (strain ATCC MYA-4609 / CBS 101355 / FGSC A1100 / Af293)</name>
    <name type="common">Neosartorya fumigata</name>
    <dbReference type="NCBI Taxonomy" id="330879"/>
    <lineage>
        <taxon>Eukaryota</taxon>
        <taxon>Fungi</taxon>
        <taxon>Dikarya</taxon>
        <taxon>Ascomycota</taxon>
        <taxon>Pezizomycotina</taxon>
        <taxon>Eurotiomycetes</taxon>
        <taxon>Eurotiomycetidae</taxon>
        <taxon>Eurotiales</taxon>
        <taxon>Aspergillaceae</taxon>
        <taxon>Aspergillus</taxon>
        <taxon>Aspergillus subgen. Fumigati</taxon>
    </lineage>
</organism>
<reference key="1">
    <citation type="journal article" date="2005" name="Nature">
        <title>Genomic sequence of the pathogenic and allergenic filamentous fungus Aspergillus fumigatus.</title>
        <authorList>
            <person name="Nierman W.C."/>
            <person name="Pain A."/>
            <person name="Anderson M.J."/>
            <person name="Wortman J.R."/>
            <person name="Kim H.S."/>
            <person name="Arroyo J."/>
            <person name="Berriman M."/>
            <person name="Abe K."/>
            <person name="Archer D.B."/>
            <person name="Bermejo C."/>
            <person name="Bennett J.W."/>
            <person name="Bowyer P."/>
            <person name="Chen D."/>
            <person name="Collins M."/>
            <person name="Coulsen R."/>
            <person name="Davies R."/>
            <person name="Dyer P.S."/>
            <person name="Farman M.L."/>
            <person name="Fedorova N."/>
            <person name="Fedorova N.D."/>
            <person name="Feldblyum T.V."/>
            <person name="Fischer R."/>
            <person name="Fosker N."/>
            <person name="Fraser A."/>
            <person name="Garcia J.L."/>
            <person name="Garcia M.J."/>
            <person name="Goble A."/>
            <person name="Goldman G.H."/>
            <person name="Gomi K."/>
            <person name="Griffith-Jones S."/>
            <person name="Gwilliam R."/>
            <person name="Haas B.J."/>
            <person name="Haas H."/>
            <person name="Harris D.E."/>
            <person name="Horiuchi H."/>
            <person name="Huang J."/>
            <person name="Humphray S."/>
            <person name="Jimenez J."/>
            <person name="Keller N."/>
            <person name="Khouri H."/>
            <person name="Kitamoto K."/>
            <person name="Kobayashi T."/>
            <person name="Konzack S."/>
            <person name="Kulkarni R."/>
            <person name="Kumagai T."/>
            <person name="Lafton A."/>
            <person name="Latge J.-P."/>
            <person name="Li W."/>
            <person name="Lord A."/>
            <person name="Lu C."/>
            <person name="Majoros W.H."/>
            <person name="May G.S."/>
            <person name="Miller B.L."/>
            <person name="Mohamoud Y."/>
            <person name="Molina M."/>
            <person name="Monod M."/>
            <person name="Mouyna I."/>
            <person name="Mulligan S."/>
            <person name="Murphy L.D."/>
            <person name="O'Neil S."/>
            <person name="Paulsen I."/>
            <person name="Penalva M.A."/>
            <person name="Pertea M."/>
            <person name="Price C."/>
            <person name="Pritchard B.L."/>
            <person name="Quail M.A."/>
            <person name="Rabbinowitsch E."/>
            <person name="Rawlins N."/>
            <person name="Rajandream M.A."/>
            <person name="Reichard U."/>
            <person name="Renauld H."/>
            <person name="Robson G.D."/>
            <person name="Rodriguez de Cordoba S."/>
            <person name="Rodriguez-Pena J.M."/>
            <person name="Ronning C.M."/>
            <person name="Rutter S."/>
            <person name="Salzberg S.L."/>
            <person name="Sanchez M."/>
            <person name="Sanchez-Ferrero J.C."/>
            <person name="Saunders D."/>
            <person name="Seeger K."/>
            <person name="Squares R."/>
            <person name="Squares S."/>
            <person name="Takeuchi M."/>
            <person name="Tekaia F."/>
            <person name="Turner G."/>
            <person name="Vazquez de Aldana C.R."/>
            <person name="Weidman J."/>
            <person name="White O."/>
            <person name="Woodward J.R."/>
            <person name="Yu J.-H."/>
            <person name="Fraser C.M."/>
            <person name="Galagan J.E."/>
            <person name="Asai K."/>
            <person name="Machida M."/>
            <person name="Hall N."/>
            <person name="Barrell B.G."/>
            <person name="Denning D.W."/>
        </authorList>
    </citation>
    <scope>NUCLEOTIDE SEQUENCE [LARGE SCALE GENOMIC DNA]</scope>
    <source>
        <strain>ATCC MYA-4609 / CBS 101355 / FGSC A1100 / Af293</strain>
    </source>
</reference>
<feature type="chain" id="PRO_0000228061" description="Mitochondrial import inner membrane translocase subunit tim10">
    <location>
        <begin position="1"/>
        <end position="93"/>
    </location>
</feature>
<feature type="short sequence motif" description="Twin CX3C motif">
    <location>
        <begin position="38"/>
        <end position="63"/>
    </location>
</feature>
<feature type="disulfide bond" evidence="1">
    <location>
        <begin position="38"/>
        <end position="63"/>
    </location>
</feature>
<feature type="disulfide bond" evidence="1">
    <location>
        <begin position="42"/>
        <end position="59"/>
    </location>
</feature>